<accession>Q602A0</accession>
<keyword id="KW-0066">ATP synthesis</keyword>
<keyword id="KW-1003">Cell membrane</keyword>
<keyword id="KW-0138">CF(0)</keyword>
<keyword id="KW-0375">Hydrogen ion transport</keyword>
<keyword id="KW-0406">Ion transport</keyword>
<keyword id="KW-0446">Lipid-binding</keyword>
<keyword id="KW-0472">Membrane</keyword>
<keyword id="KW-0812">Transmembrane</keyword>
<keyword id="KW-1133">Transmembrane helix</keyword>
<keyword id="KW-0813">Transport</keyword>
<name>ATPL_MESH2</name>
<evidence type="ECO:0000255" key="1">
    <source>
        <dbReference type="HAMAP-Rule" id="MF_01396"/>
    </source>
</evidence>
<gene>
    <name evidence="1" type="primary">atpE</name>
    <name type="ordered locus">mhp050</name>
</gene>
<organism>
    <name type="scientific">Mesomycoplasma hyopneumoniae (strain 232)</name>
    <name type="common">Mycoplasma hyopneumoniae</name>
    <dbReference type="NCBI Taxonomy" id="295358"/>
    <lineage>
        <taxon>Bacteria</taxon>
        <taxon>Bacillati</taxon>
        <taxon>Mycoplasmatota</taxon>
        <taxon>Mycoplasmoidales</taxon>
        <taxon>Metamycoplasmataceae</taxon>
        <taxon>Mesomycoplasma</taxon>
    </lineage>
</organism>
<feature type="chain" id="PRO_0000365898" description="ATP synthase subunit c">
    <location>
        <begin position="1"/>
        <end position="101"/>
    </location>
</feature>
<feature type="transmembrane region" description="Helical" evidence="1">
    <location>
        <begin position="31"/>
        <end position="51"/>
    </location>
</feature>
<feature type="transmembrane region" description="Helical" evidence="1">
    <location>
        <begin position="81"/>
        <end position="101"/>
    </location>
</feature>
<feature type="site" description="Reversibly protonated during proton transport" evidence="1">
    <location>
        <position position="84"/>
    </location>
</feature>
<protein>
    <recommendedName>
        <fullName evidence="1">ATP synthase subunit c</fullName>
    </recommendedName>
    <alternativeName>
        <fullName evidence="1">ATP synthase F(0) sector subunit c</fullName>
    </alternativeName>
    <alternativeName>
        <fullName evidence="1">F-type ATPase subunit c</fullName>
        <shortName evidence="1">F-ATPase subunit c</shortName>
    </alternativeName>
    <alternativeName>
        <fullName evidence="1">Lipid-binding protein</fullName>
    </alternativeName>
</protein>
<sequence length="101" mass="10494">MNSIVNFSQQLIQNFQEVSQKTAADSSNLKAFAYLGAGLAMIGVIGVGAGQGYAAGKACDAIARNPEAQKQVFRVLVIGTAISETSSIYALLVALILIFVG</sequence>
<comment type="function">
    <text evidence="1">F(1)F(0) ATP synthase produces ATP from ADP in the presence of a proton or sodium gradient. F-type ATPases consist of two structural domains, F(1) containing the extramembraneous catalytic core and F(0) containing the membrane proton channel, linked together by a central stalk and a peripheral stalk. During catalysis, ATP synthesis in the catalytic domain of F(1) is coupled via a rotary mechanism of the central stalk subunits to proton translocation.</text>
</comment>
<comment type="function">
    <text evidence="1">Key component of the F(0) channel; it plays a direct role in translocation across the membrane. A homomeric c-ring of between 10-14 subunits forms the central stalk rotor element with the F(1) delta and epsilon subunits.</text>
</comment>
<comment type="subunit">
    <text evidence="1">F-type ATPases have 2 components, F(1) - the catalytic core - and F(0) - the membrane proton channel. F(1) has five subunits: alpha(3), beta(3), gamma(1), delta(1), epsilon(1). F(0) has three main subunits: a(1), b(2) and c(10-14). The alpha and beta chains form an alternating ring which encloses part of the gamma chain. F(1) is attached to F(0) by a central stalk formed by the gamma and epsilon chains, while a peripheral stalk is formed by the delta and b chains.</text>
</comment>
<comment type="subcellular location">
    <subcellularLocation>
        <location evidence="1">Cell membrane</location>
        <topology evidence="1">Multi-pass membrane protein</topology>
    </subcellularLocation>
</comment>
<comment type="similarity">
    <text evidence="1">Belongs to the ATPase C chain family.</text>
</comment>
<proteinExistence type="inferred from homology"/>
<dbReference type="EMBL" id="AE017332">
    <property type="protein sequence ID" value="AAV27375.1"/>
    <property type="molecule type" value="Genomic_DNA"/>
</dbReference>
<dbReference type="RefSeq" id="WP_011205889.1">
    <property type="nucleotide sequence ID" value="NC_006360.1"/>
</dbReference>
<dbReference type="SMR" id="Q602A0"/>
<dbReference type="KEGG" id="mhy:mhp050"/>
<dbReference type="eggNOG" id="COG0636">
    <property type="taxonomic scope" value="Bacteria"/>
</dbReference>
<dbReference type="HOGENOM" id="CLU_148047_2_2_14"/>
<dbReference type="PhylomeDB" id="Q602A0"/>
<dbReference type="Proteomes" id="UP000006822">
    <property type="component" value="Chromosome"/>
</dbReference>
<dbReference type="GO" id="GO:0005886">
    <property type="term" value="C:plasma membrane"/>
    <property type="evidence" value="ECO:0007669"/>
    <property type="project" value="UniProtKB-SubCell"/>
</dbReference>
<dbReference type="GO" id="GO:0045259">
    <property type="term" value="C:proton-transporting ATP synthase complex"/>
    <property type="evidence" value="ECO:0007669"/>
    <property type="project" value="UniProtKB-KW"/>
</dbReference>
<dbReference type="GO" id="GO:0033177">
    <property type="term" value="C:proton-transporting two-sector ATPase complex, proton-transporting domain"/>
    <property type="evidence" value="ECO:0007669"/>
    <property type="project" value="InterPro"/>
</dbReference>
<dbReference type="GO" id="GO:0008289">
    <property type="term" value="F:lipid binding"/>
    <property type="evidence" value="ECO:0007669"/>
    <property type="project" value="UniProtKB-KW"/>
</dbReference>
<dbReference type="GO" id="GO:0046933">
    <property type="term" value="F:proton-transporting ATP synthase activity, rotational mechanism"/>
    <property type="evidence" value="ECO:0007669"/>
    <property type="project" value="UniProtKB-UniRule"/>
</dbReference>
<dbReference type="CDD" id="cd18184">
    <property type="entry name" value="ATP-synt_Fo_c_NaATPase"/>
    <property type="match status" value="1"/>
</dbReference>
<dbReference type="Gene3D" id="1.20.120.610">
    <property type="entry name" value="lithium bound rotor ring of v- atpase"/>
    <property type="match status" value="1"/>
</dbReference>
<dbReference type="HAMAP" id="MF_01396">
    <property type="entry name" value="ATP_synth_c_bact"/>
    <property type="match status" value="1"/>
</dbReference>
<dbReference type="InterPro" id="IPR005953">
    <property type="entry name" value="ATP_synth_csu_bac/chlpt"/>
</dbReference>
<dbReference type="InterPro" id="IPR000454">
    <property type="entry name" value="ATP_synth_F0_csu"/>
</dbReference>
<dbReference type="InterPro" id="IPR020537">
    <property type="entry name" value="ATP_synth_F0_csu_DDCD_BS"/>
</dbReference>
<dbReference type="InterPro" id="IPR002379">
    <property type="entry name" value="ATPase_proteolipid_c-like_dom"/>
</dbReference>
<dbReference type="InterPro" id="IPR035921">
    <property type="entry name" value="F/V-ATP_Csub_sf"/>
</dbReference>
<dbReference type="NCBIfam" id="TIGR01260">
    <property type="entry name" value="ATP_synt_c"/>
    <property type="match status" value="1"/>
</dbReference>
<dbReference type="NCBIfam" id="NF005521">
    <property type="entry name" value="PRK07159.1"/>
    <property type="match status" value="1"/>
</dbReference>
<dbReference type="PANTHER" id="PTHR10031">
    <property type="entry name" value="ATP SYNTHASE LIPID-BINDING PROTEIN, MITOCHONDRIAL"/>
    <property type="match status" value="1"/>
</dbReference>
<dbReference type="PANTHER" id="PTHR10031:SF0">
    <property type="entry name" value="ATPASE PROTEIN 9"/>
    <property type="match status" value="1"/>
</dbReference>
<dbReference type="Pfam" id="PF00137">
    <property type="entry name" value="ATP-synt_C"/>
    <property type="match status" value="1"/>
</dbReference>
<dbReference type="PRINTS" id="PR00124">
    <property type="entry name" value="ATPASEC"/>
</dbReference>
<dbReference type="SUPFAM" id="SSF81333">
    <property type="entry name" value="F1F0 ATP synthase subunit C"/>
    <property type="match status" value="1"/>
</dbReference>
<dbReference type="PROSITE" id="PS00605">
    <property type="entry name" value="ATPASE_C"/>
    <property type="match status" value="1"/>
</dbReference>
<reference key="1">
    <citation type="journal article" date="2004" name="J. Bacteriol.">
        <title>The genome sequence of Mycoplasma hyopneumoniae strain 232, the agent of swine mycoplasmosis.</title>
        <authorList>
            <person name="Minion F.C."/>
            <person name="Lefkowitz E.J."/>
            <person name="Madsen M.L."/>
            <person name="Cleary B.J."/>
            <person name="Swartzell S.M."/>
            <person name="Mahairas G.G."/>
        </authorList>
    </citation>
    <scope>NUCLEOTIDE SEQUENCE [LARGE SCALE GENOMIC DNA]</scope>
    <source>
        <strain>232</strain>
    </source>
</reference>